<organism>
    <name type="scientific">Nicotiana plumbaginifolia</name>
    <name type="common">Leadwort-leaved tobacco</name>
    <name type="synonym">Tex-Mex tobacco</name>
    <dbReference type="NCBI Taxonomy" id="4092"/>
    <lineage>
        <taxon>Eukaryota</taxon>
        <taxon>Viridiplantae</taxon>
        <taxon>Streptophyta</taxon>
        <taxon>Embryophyta</taxon>
        <taxon>Tracheophyta</taxon>
        <taxon>Spermatophyta</taxon>
        <taxon>Magnoliopsida</taxon>
        <taxon>eudicotyledons</taxon>
        <taxon>Gunneridae</taxon>
        <taxon>Pentapetalae</taxon>
        <taxon>asterids</taxon>
        <taxon>lamiids</taxon>
        <taxon>Solanales</taxon>
        <taxon>Solanaceae</taxon>
        <taxon>Nicotianoideae</taxon>
        <taxon>Nicotianeae</taxon>
        <taxon>Nicotiana</taxon>
    </lineage>
</organism>
<feature type="chain" id="PRO_0000197406" description="Metallothionein-like protein type 2">
    <location>
        <begin position="1"/>
        <end position="74"/>
    </location>
</feature>
<proteinExistence type="inferred from homology"/>
<keyword id="KW-0479">Metal-binding</keyword>
<keyword id="KW-0480">Metal-thiolate cluster</keyword>
<dbReference type="EMBL" id="U35225">
    <property type="protein sequence ID" value="AAB05375.1"/>
    <property type="molecule type" value="mRNA"/>
</dbReference>
<dbReference type="PIR" id="T16979">
    <property type="entry name" value="T16979"/>
</dbReference>
<dbReference type="GO" id="GO:0046872">
    <property type="term" value="F:metal ion binding"/>
    <property type="evidence" value="ECO:0007669"/>
    <property type="project" value="UniProtKB-KW"/>
</dbReference>
<dbReference type="InterPro" id="IPR000347">
    <property type="entry name" value="Metalthion_15p"/>
</dbReference>
<dbReference type="PANTHER" id="PTHR33543:SF39">
    <property type="entry name" value="METALLOTHIONEIN-LIKE PROTEIN"/>
    <property type="match status" value="1"/>
</dbReference>
<dbReference type="PANTHER" id="PTHR33543">
    <property type="entry name" value="METALLOTHIONEIN-LIKE PROTEIN 2A"/>
    <property type="match status" value="1"/>
</dbReference>
<dbReference type="Pfam" id="PF01439">
    <property type="entry name" value="Metallothio_2"/>
    <property type="match status" value="1"/>
</dbReference>
<reference key="1">
    <citation type="submission" date="1996-08" db="EMBL/GenBank/DDBJ databases">
        <authorList>
            <person name="Larosa P.C."/>
            <person name="Smigocki A.C."/>
        </authorList>
    </citation>
    <scope>NUCLEOTIDE SEQUENCE [MRNA]</scope>
    <source>
        <tissue>Shoot</tissue>
    </source>
</reference>
<evidence type="ECO:0000305" key="1"/>
<protein>
    <recommendedName>
        <fullName>Metallothionein-like protein type 2</fullName>
    </recommendedName>
</protein>
<accession>Q40410</accession>
<name>MT2_NICPL</name>
<sequence>MSCCGGSCGCGSGCKCGSGCGGCGMYPDLEKSTTFTIIQGVAPMNNFEELGEKAAEGGNGCKCGSNCTCDPCNC</sequence>
<comment type="function">
    <text>Metallothioneins have a high content of cysteine residues that bind various heavy metals.</text>
</comment>
<comment type="similarity">
    <text evidence="1">Belongs to the metallothionein superfamily. Type 15 family.</text>
</comment>